<gene>
    <name type="ordered locus">SP_1563</name>
</gene>
<comment type="catalytic activity">
    <reaction evidence="1">
        <text>2 reduced [2Fe-2S]-[ferredoxin] + NADP(+) + H(+) = 2 oxidized [2Fe-2S]-[ferredoxin] + NADPH</text>
        <dbReference type="Rhea" id="RHEA:20125"/>
        <dbReference type="Rhea" id="RHEA-COMP:10000"/>
        <dbReference type="Rhea" id="RHEA-COMP:10001"/>
        <dbReference type="ChEBI" id="CHEBI:15378"/>
        <dbReference type="ChEBI" id="CHEBI:33737"/>
        <dbReference type="ChEBI" id="CHEBI:33738"/>
        <dbReference type="ChEBI" id="CHEBI:57783"/>
        <dbReference type="ChEBI" id="CHEBI:58349"/>
        <dbReference type="EC" id="1.18.1.2"/>
    </reaction>
</comment>
<comment type="cofactor">
    <cofactor evidence="1">
        <name>FAD</name>
        <dbReference type="ChEBI" id="CHEBI:57692"/>
    </cofactor>
    <text evidence="1">Binds 1 FAD per subunit.</text>
</comment>
<comment type="subunit">
    <text evidence="1">Homodimer.</text>
</comment>
<comment type="similarity">
    <text evidence="1">Belongs to the ferredoxin--NADP reductase type 2 family.</text>
</comment>
<name>FENR_STRPN</name>
<proteinExistence type="inferred from homology"/>
<accession>Q97PP0</accession>
<feature type="chain" id="PRO_0000364956" description="Ferredoxin--NADP reductase">
    <location>
        <begin position="1"/>
        <end position="321"/>
    </location>
</feature>
<feature type="binding site" evidence="1">
    <location>
        <position position="34"/>
    </location>
    <ligand>
        <name>FAD</name>
        <dbReference type="ChEBI" id="CHEBI:57692"/>
    </ligand>
</feature>
<feature type="binding site" evidence="1">
    <location>
        <position position="42"/>
    </location>
    <ligand>
        <name>FAD</name>
        <dbReference type="ChEBI" id="CHEBI:57692"/>
    </ligand>
</feature>
<feature type="binding site" evidence="1">
    <location>
        <position position="47"/>
    </location>
    <ligand>
        <name>FAD</name>
        <dbReference type="ChEBI" id="CHEBI:57692"/>
    </ligand>
</feature>
<feature type="binding site" evidence="1">
    <location>
        <position position="87"/>
    </location>
    <ligand>
        <name>FAD</name>
        <dbReference type="ChEBI" id="CHEBI:57692"/>
    </ligand>
</feature>
<feature type="binding site" evidence="1">
    <location>
        <position position="119"/>
    </location>
    <ligand>
        <name>FAD</name>
        <dbReference type="ChEBI" id="CHEBI:57692"/>
    </ligand>
</feature>
<feature type="binding site" evidence="1">
    <location>
        <position position="278"/>
    </location>
    <ligand>
        <name>FAD</name>
        <dbReference type="ChEBI" id="CHEBI:57692"/>
    </ligand>
</feature>
<feature type="binding site" evidence="1">
    <location>
        <position position="319"/>
    </location>
    <ligand>
        <name>FAD</name>
        <dbReference type="ChEBI" id="CHEBI:57692"/>
    </ligand>
</feature>
<dbReference type="EC" id="1.18.1.2" evidence="1"/>
<dbReference type="EMBL" id="AE005672">
    <property type="protein sequence ID" value="AAK75650.1"/>
    <property type="molecule type" value="Genomic_DNA"/>
</dbReference>
<dbReference type="PIR" id="A95182">
    <property type="entry name" value="A95182"/>
</dbReference>
<dbReference type="RefSeq" id="WP_000081011.1">
    <property type="nucleotide sequence ID" value="NZ_CP155539.1"/>
</dbReference>
<dbReference type="SMR" id="Q97PP0"/>
<dbReference type="PaxDb" id="170187-SP_1563"/>
<dbReference type="EnsemblBacteria" id="AAK75650">
    <property type="protein sequence ID" value="AAK75650"/>
    <property type="gene ID" value="SP_1563"/>
</dbReference>
<dbReference type="KEGG" id="spn:SP_1563"/>
<dbReference type="eggNOG" id="COG0492">
    <property type="taxonomic scope" value="Bacteria"/>
</dbReference>
<dbReference type="PhylomeDB" id="Q97PP0"/>
<dbReference type="BioCyc" id="SPNE170187:G1FZB-1582-MONOMER"/>
<dbReference type="Proteomes" id="UP000000585">
    <property type="component" value="Chromosome"/>
</dbReference>
<dbReference type="GO" id="GO:0004324">
    <property type="term" value="F:ferredoxin-NADP+ reductase activity"/>
    <property type="evidence" value="ECO:0007669"/>
    <property type="project" value="UniProtKB-UniRule"/>
</dbReference>
<dbReference type="GO" id="GO:0050660">
    <property type="term" value="F:flavin adenine dinucleotide binding"/>
    <property type="evidence" value="ECO:0007669"/>
    <property type="project" value="UniProtKB-UniRule"/>
</dbReference>
<dbReference type="GO" id="GO:0050661">
    <property type="term" value="F:NADP binding"/>
    <property type="evidence" value="ECO:0007669"/>
    <property type="project" value="UniProtKB-UniRule"/>
</dbReference>
<dbReference type="Gene3D" id="3.50.50.60">
    <property type="entry name" value="FAD/NAD(P)-binding domain"/>
    <property type="match status" value="2"/>
</dbReference>
<dbReference type="HAMAP" id="MF_01685">
    <property type="entry name" value="FENR2"/>
    <property type="match status" value="1"/>
</dbReference>
<dbReference type="InterPro" id="IPR036188">
    <property type="entry name" value="FAD/NAD-bd_sf"/>
</dbReference>
<dbReference type="InterPro" id="IPR023753">
    <property type="entry name" value="FAD/NAD-binding_dom"/>
</dbReference>
<dbReference type="InterPro" id="IPR022890">
    <property type="entry name" value="Fd--NADP_Rdtase_type_2"/>
</dbReference>
<dbReference type="InterPro" id="IPR050097">
    <property type="entry name" value="Ferredoxin-NADP_redctase_2"/>
</dbReference>
<dbReference type="PANTHER" id="PTHR48105">
    <property type="entry name" value="THIOREDOXIN REDUCTASE 1-RELATED-RELATED"/>
    <property type="match status" value="1"/>
</dbReference>
<dbReference type="Pfam" id="PF07992">
    <property type="entry name" value="Pyr_redox_2"/>
    <property type="match status" value="1"/>
</dbReference>
<dbReference type="PRINTS" id="PR00368">
    <property type="entry name" value="FADPNR"/>
</dbReference>
<dbReference type="PRINTS" id="PR00469">
    <property type="entry name" value="PNDRDTASEII"/>
</dbReference>
<dbReference type="SUPFAM" id="SSF51905">
    <property type="entry name" value="FAD/NAD(P)-binding domain"/>
    <property type="match status" value="1"/>
</dbReference>
<evidence type="ECO:0000255" key="1">
    <source>
        <dbReference type="HAMAP-Rule" id="MF_01685"/>
    </source>
</evidence>
<reference key="1">
    <citation type="journal article" date="2001" name="Science">
        <title>Complete genome sequence of a virulent isolate of Streptococcus pneumoniae.</title>
        <authorList>
            <person name="Tettelin H."/>
            <person name="Nelson K.E."/>
            <person name="Paulsen I.T."/>
            <person name="Eisen J.A."/>
            <person name="Read T.D."/>
            <person name="Peterson S.N."/>
            <person name="Heidelberg J.F."/>
            <person name="DeBoy R.T."/>
            <person name="Haft D.H."/>
            <person name="Dodson R.J."/>
            <person name="Durkin A.S."/>
            <person name="Gwinn M.L."/>
            <person name="Kolonay J.F."/>
            <person name="Nelson W.C."/>
            <person name="Peterson J.D."/>
            <person name="Umayam L.A."/>
            <person name="White O."/>
            <person name="Salzberg S.L."/>
            <person name="Lewis M.R."/>
            <person name="Radune D."/>
            <person name="Holtzapple E.K."/>
            <person name="Khouri H.M."/>
            <person name="Wolf A.M."/>
            <person name="Utterback T.R."/>
            <person name="Hansen C.L."/>
            <person name="McDonald L.A."/>
            <person name="Feldblyum T.V."/>
            <person name="Angiuoli S.V."/>
            <person name="Dickinson T."/>
            <person name="Hickey E.K."/>
            <person name="Holt I.E."/>
            <person name="Loftus B.J."/>
            <person name="Yang F."/>
            <person name="Smith H.O."/>
            <person name="Venter J.C."/>
            <person name="Dougherty B.A."/>
            <person name="Morrison D.A."/>
            <person name="Hollingshead S.K."/>
            <person name="Fraser C.M."/>
        </authorList>
    </citation>
    <scope>NUCLEOTIDE SEQUENCE [LARGE SCALE GENOMIC DNA]</scope>
    <source>
        <strain>ATCC BAA-334 / TIGR4</strain>
    </source>
</reference>
<protein>
    <recommendedName>
        <fullName evidence="1">Ferredoxin--NADP reductase</fullName>
        <shortName evidence="1">FNR</shortName>
        <shortName evidence="1">Fd-NADP(+) reductase</shortName>
        <ecNumber evidence="1">1.18.1.2</ecNumber>
    </recommendedName>
</protein>
<sequence>MSQLYDITIVGGGPVGLFAAFYAHLRQAKVQIIDSLPQLGGQPAILYPEKEILDVPGFPNLTGEELTNRLIEQLNGFDTPIHLNETVLEIDKQEEFAITTSKGSHLTKTVIIAMGGGAFKPRPLELEGVEGYENIHYHVSNIQQYAGKKVTILGGGDSAVDWALAFEKIAPTTLVHRRDNFRALEHSVQALQESSVTIKTPFAPSQLLGNGKTLDKLEITKVKSDETETIDLDHLFVNYGFKSSVGNLKNWGLDLNRHKIIVNSKQESSQAGIYAIGDCCYYDGKIDLIATGLGEAPTAVNNAINYIDPEQKVQPKHSTSL</sequence>
<organism>
    <name type="scientific">Streptococcus pneumoniae serotype 4 (strain ATCC BAA-334 / TIGR4)</name>
    <dbReference type="NCBI Taxonomy" id="170187"/>
    <lineage>
        <taxon>Bacteria</taxon>
        <taxon>Bacillati</taxon>
        <taxon>Bacillota</taxon>
        <taxon>Bacilli</taxon>
        <taxon>Lactobacillales</taxon>
        <taxon>Streptococcaceae</taxon>
        <taxon>Streptococcus</taxon>
    </lineage>
</organism>
<keyword id="KW-0274">FAD</keyword>
<keyword id="KW-0285">Flavoprotein</keyword>
<keyword id="KW-0521">NADP</keyword>
<keyword id="KW-0560">Oxidoreductase</keyword>
<keyword id="KW-1185">Reference proteome</keyword>